<proteinExistence type="evidence at transcript level"/>
<gene>
    <name evidence="6" type="primary">R7</name>
</gene>
<sequence>MTKPFILLVPGSFAPETIYASTIAHLRTLGFPAVALRLPTTTKRMPLPAATMAEDADVIKRSVEAVLATGQEVVVVCHSYGGTPTTQALGELGEKKGVRRVVYLSAIIPRVGESNNDAMGGKKGELAFEMTEGYMHIDATTFAPAVCNDLSWDLAYEHTLNLAHHSGASFLEPATQAGYLDIPVSYIFCEKDMVVTPEKQSGFIDVVKEATGKEVHVVKLDAGHCPNWSMPEKLGDVIAEMAGM</sequence>
<name>MFR7_PHOSM</name>
<feature type="signal peptide" evidence="3">
    <location>
        <begin position="1"/>
        <end position="20"/>
    </location>
</feature>
<feature type="chain" id="PRO_0000447844" description="Probable hydrolase R7">
    <location>
        <begin position="21"/>
        <end position="244"/>
    </location>
</feature>
<feature type="active site" description="Charge relay system" evidence="1">
    <location>
        <position position="192"/>
    </location>
</feature>
<feature type="active site" description="Charge relay system" evidence="1">
    <location>
        <position position="224"/>
    </location>
</feature>
<feature type="glycosylation site" description="N-linked (GlcNAc...) asparagine" evidence="4">
    <location>
        <position position="227"/>
    </location>
</feature>
<organism>
    <name type="scientific">Phoma sp. (strain ATCC 20986 / MF5453)</name>
    <dbReference type="NCBI Taxonomy" id="1828523"/>
    <lineage>
        <taxon>Eukaryota</taxon>
        <taxon>Fungi</taxon>
        <taxon>Dikarya</taxon>
        <taxon>Ascomycota</taxon>
        <taxon>Pezizomycotina</taxon>
        <taxon>Dothideomycetes</taxon>
        <taxon>Pleosporomycetidae</taxon>
        <taxon>Pleosporales</taxon>
        <taxon>Pleosporineae</taxon>
        <taxon>Didymellaceae</taxon>
        <taxon>Phoma</taxon>
    </lineage>
</organism>
<comment type="function">
    <text evidence="2 5 8">Probable hydrolase; part of the gene cluster that mediates the biosynthesis of squalestatin S1 (SQS1, also known as zaragozic acid A), a lead compound for the treatment of hyper-cholesterolemia by targeting squalene synthase (SS) (PubMed:27056201). Both phenylalanine and benzoic acid are known precursors of SQS1 and so it is unsurprising that the cluster also contains genes potentially involved in benzoate production such as phenyl-alanine ammonia lysase (PAL) M7, which catalyzes the first step in the degradation of phenylalanine, or the NADP-dependent dehydrogenase M3 (PubMed:27056201). The cluster contains two PKS encoding genes. The tetraketide synthase is responsible for the biosynthesis of the tetraketide sidechain of SQS1 (By similarity). The biosynthesis must involve 3 rounds of chain extension. After the first and second rounds methyl-transfer occurs, and in all rounds of extension the ketoreductase and dehydratase areactive. The enoyl reductase and C-MeT are not active in the final round of extension (By similarity). The other PKS is therefore likely to encode squalestatin hexaketide synthase (SQHKS) (PubMed:27056201). The hexaketide main chain is initiated by benzoate which is an unusual starter unit for a highly reducing polyketide synthase (PubMed:27056201). The cluster also contains a gene encoding a citrate synthase-like protein R3 presumably involved in linking the hexaketide to the oxaloacetate moiety (Probable). Formation of the tetraketide CoA may be catalyzed by the M9 CoA ligase, but the mechanism of release of the tetraketide and the hexaketide from their respective PKS remains unknown, although the cluster encodes a potential esterase (M8) and a possible hydrolase (M10) which could be involved in these processes (Probable). Two acyltransferases (AT), M4 and R4, are also encoded in the cluster. M4 is responsible for loading of the tetraketide sidechain from CoA onto the squalestatin core as the final step of biosynthesis (PubMed:27056201). M4 appears to have a broad substrate selectivity for its acyl CoA substrate, allowing the in vitro synthesis of novel squalestatins (PubMed:27056201). The biosynthesis of SQS1 requires several oxidative steps likely performed by oxidoreductases M1, R1 and R2 (Probable). Finally, in support of the identification of the cluster as being responsible for SQS1 production, the cluster contains a gene encoding a putative squalene synthase (SS) R6, suggesting a likely mechanism for self-resistance (PubMed:27056201).</text>
</comment>
<comment type="pathway">
    <text evidence="8">Secondary metabolite biosynthesis.</text>
</comment>
<comment type="induction">
    <text evidence="5">Expression is induced on squalestatin S1-producing YMG medium.</text>
</comment>
<comment type="similarity">
    <text evidence="7">Belongs to the AB hydrolase superfamily.</text>
</comment>
<dbReference type="EC" id="3.1.1.-" evidence="8"/>
<dbReference type="EMBL" id="KU946987">
    <property type="protein sequence ID" value="AMY15075.1"/>
    <property type="molecule type" value="Genomic_DNA"/>
</dbReference>
<dbReference type="SMR" id="A0A3G1DJF7"/>
<dbReference type="ESTHER" id="phosm-mfr7">
    <property type="family name" value="6_AlphaBeta_hydrolase"/>
</dbReference>
<dbReference type="GlyCosmos" id="A0A3G1DJF7">
    <property type="glycosylation" value="1 site, No reported glycans"/>
</dbReference>
<dbReference type="GO" id="GO:0016787">
    <property type="term" value="F:hydrolase activity"/>
    <property type="evidence" value="ECO:0007669"/>
    <property type="project" value="UniProtKB-KW"/>
</dbReference>
<dbReference type="Gene3D" id="3.40.50.1820">
    <property type="entry name" value="alpha/beta hydrolase"/>
    <property type="match status" value="1"/>
</dbReference>
<dbReference type="InterPro" id="IPR000073">
    <property type="entry name" value="AB_hydrolase_1"/>
</dbReference>
<dbReference type="InterPro" id="IPR029058">
    <property type="entry name" value="AB_hydrolase_fold"/>
</dbReference>
<dbReference type="InterPro" id="IPR052897">
    <property type="entry name" value="Sec-Metab_Biosynth_Hydrolase"/>
</dbReference>
<dbReference type="PANTHER" id="PTHR37017:SF13">
    <property type="entry name" value="AB HYDROLASE-1 DOMAIN-CONTAINING PROTEIN"/>
    <property type="match status" value="1"/>
</dbReference>
<dbReference type="PANTHER" id="PTHR37017">
    <property type="entry name" value="AB HYDROLASE-1 DOMAIN-CONTAINING PROTEIN-RELATED"/>
    <property type="match status" value="1"/>
</dbReference>
<dbReference type="Pfam" id="PF12697">
    <property type="entry name" value="Abhydrolase_6"/>
    <property type="match status" value="1"/>
</dbReference>
<dbReference type="SUPFAM" id="SSF53474">
    <property type="entry name" value="alpha/beta-Hydrolases"/>
    <property type="match status" value="1"/>
</dbReference>
<protein>
    <recommendedName>
        <fullName evidence="6">Probable hydrolase R7</fullName>
        <ecNumber evidence="8">3.1.1.-</ecNumber>
    </recommendedName>
    <alternativeName>
        <fullName evidence="6">Squalestatin S1 biosynthesis cluster protein R7</fullName>
    </alternativeName>
</protein>
<accession>A0A3G1DJF7</accession>
<evidence type="ECO:0000250" key="1">
    <source>
        <dbReference type="UniProtKB" id="Q53547"/>
    </source>
</evidence>
<evidence type="ECO:0000250" key="2">
    <source>
        <dbReference type="UniProtKB" id="Q86ZD9"/>
    </source>
</evidence>
<evidence type="ECO:0000255" key="3"/>
<evidence type="ECO:0000255" key="4">
    <source>
        <dbReference type="PROSITE-ProRule" id="PRU00498"/>
    </source>
</evidence>
<evidence type="ECO:0000269" key="5">
    <source>
    </source>
</evidence>
<evidence type="ECO:0000303" key="6">
    <source>
    </source>
</evidence>
<evidence type="ECO:0000305" key="7"/>
<evidence type="ECO:0000305" key="8">
    <source>
    </source>
</evidence>
<reference key="1">
    <citation type="journal article" date="2016" name="Chem. Commun. (Camb.)">
        <title>Identification of genes encoding squalestatin S1 biosynthesis and in vitro production of new squalestatin analogues.</title>
        <authorList>
            <person name="Bonsch B."/>
            <person name="Belt V."/>
            <person name="Bartel C."/>
            <person name="Duensing N."/>
            <person name="Koziol M."/>
            <person name="Lazarus C.M."/>
            <person name="Bailey A.M."/>
            <person name="Simpson T.J."/>
            <person name="Cox R.J."/>
        </authorList>
    </citation>
    <scope>NUCLEOTIDE SEQUENCE [GENOMIC DNA]</scope>
    <scope>FUNCTION</scope>
    <scope>INDUCTION</scope>
</reference>
<keyword id="KW-0325">Glycoprotein</keyword>
<keyword id="KW-0378">Hydrolase</keyword>
<keyword id="KW-0732">Signal</keyword>